<protein>
    <recommendedName>
        <fullName evidence="1">Tripartite terminase subunit 3</fullName>
        <ecNumber evidence="1">3.1.-.-</ecNumber>
    </recommendedName>
    <alternativeName>
        <fullName evidence="1">Terminase large subunit</fullName>
    </alternativeName>
</protein>
<sequence length="734" mass="81078">MFGRVLGRETVQYFEALRREVQARRGAKNRAAEAQNGGEDDAKTAFLNFAIPTPQRHQTVVPGVGTLHDCCETAQIFASVARRLLFRSLSKWQSGEARERLDPASVEAYVDPKVRQALKTISFVEYSDDEARSCRNAYYSIMNTFDALRSSDAFHQVASFVARFSRLVDTSFNGADLDGDGQQASKRARVDVPTYGKQRGTLELFQKMILMHATYFIAAVILGDHADRIGAFLKMVFNTPEFSDATIRHFRQRATVFLVPRRHGKTWFLVPLIALALATFKGIKIGYTAHIRKATEPVFDEIGARLRQWFGNSPVDHVKGENISFSFPDGSKSTIVFASSHNTNGIRGQDFNLLFVDEANFIRPEAVQTIIGFLNQTNCKIIFVSSTNTGKASTSFLYNLKGAADDLLNVVTYICDEHMERVKAHTNATACSCYILNKPVFITMDGAMRNTAELFLPDSFMQEIIGGGNVSGAHRDEPVFTKTAQDRFLLYRPSTVANQDIMSSDLYVYVDPAFTTNAMASGTGVAVVGRYRSNWVVFGMEHFFLSALTGSSAELIARCVAQCLAQVFAIHKRPFDSVRVAVEGNSSQDAAVAIATNIQLELNTLRRADVVPMPGAVLFYHCTPHGSSVAYPFFLLQKQKTGAFDHFIKAFNSGSVLASQELVSNTVRLQTDPVEYLLTQMKNLTEVVTGTSETRVFTGKRNGASDDMLVALVMAVYLSSLPPTSDAFSSLPAQ</sequence>
<organismHost>
    <name type="scientific">Equus caballus</name>
    <name type="common">Horse</name>
    <dbReference type="NCBI Taxonomy" id="9796"/>
</organismHost>
<dbReference type="EC" id="3.1.-.-" evidence="1"/>
<dbReference type="EMBL" id="AY665713">
    <property type="protein sequence ID" value="AAT67302.1"/>
    <property type="molecule type" value="Genomic_DNA"/>
</dbReference>
<dbReference type="PIR" id="A36795">
    <property type="entry name" value="WZBEA1"/>
</dbReference>
<dbReference type="SMR" id="P28969"/>
<dbReference type="KEGG" id="vg:1487536"/>
<dbReference type="Proteomes" id="UP000001189">
    <property type="component" value="Segment"/>
</dbReference>
<dbReference type="GO" id="GO:0042025">
    <property type="term" value="C:host cell nucleus"/>
    <property type="evidence" value="ECO:0007669"/>
    <property type="project" value="UniProtKB-SubCell"/>
</dbReference>
<dbReference type="GO" id="GO:0003677">
    <property type="term" value="F:DNA binding"/>
    <property type="evidence" value="ECO:0007669"/>
    <property type="project" value="UniProtKB-KW"/>
</dbReference>
<dbReference type="GO" id="GO:0016787">
    <property type="term" value="F:hydrolase activity"/>
    <property type="evidence" value="ECO:0007669"/>
    <property type="project" value="UniProtKB-KW"/>
</dbReference>
<dbReference type="GO" id="GO:0051276">
    <property type="term" value="P:chromosome organization"/>
    <property type="evidence" value="ECO:0007669"/>
    <property type="project" value="InterPro"/>
</dbReference>
<dbReference type="Gene3D" id="3.30.420.320">
    <property type="match status" value="1"/>
</dbReference>
<dbReference type="Gene3D" id="3.40.50.300">
    <property type="entry name" value="P-loop containing nucleotide triphosphate hydrolases"/>
    <property type="match status" value="1"/>
</dbReference>
<dbReference type="HAMAP" id="MF_04013">
    <property type="entry name" value="HSV_TRM3"/>
    <property type="match status" value="1"/>
</dbReference>
<dbReference type="InterPro" id="IPR003498">
    <property type="entry name" value="DNA_pack_C"/>
</dbReference>
<dbReference type="InterPro" id="IPR038435">
    <property type="entry name" value="DNA_pack_C_sf"/>
</dbReference>
<dbReference type="InterPro" id="IPR003499">
    <property type="entry name" value="DNA_pack_N"/>
</dbReference>
<dbReference type="InterPro" id="IPR033663">
    <property type="entry name" value="HSV_TRM3"/>
</dbReference>
<dbReference type="InterPro" id="IPR027417">
    <property type="entry name" value="P-loop_NTPase"/>
</dbReference>
<dbReference type="Pfam" id="PF02499">
    <property type="entry name" value="DNA_pack_C"/>
    <property type="match status" value="1"/>
</dbReference>
<dbReference type="Pfam" id="PF02500">
    <property type="entry name" value="DNA_pack_N"/>
    <property type="match status" value="1"/>
</dbReference>
<dbReference type="SUPFAM" id="SSF52540">
    <property type="entry name" value="P-loop containing nucleoside triphosphate hydrolases"/>
    <property type="match status" value="1"/>
</dbReference>
<name>TRM3_EHV1B</name>
<accession>P28969</accession>
<accession>Q6S6S7</accession>
<gene>
    <name evidence="1" type="primary">TRM3</name>
    <name type="ordered locus">44</name>
</gene>
<feature type="chain" id="PRO_0000115943" description="Tripartite terminase subunit 3">
    <location>
        <begin position="1"/>
        <end position="734"/>
    </location>
</feature>
<feature type="short sequence motif" description="Nuclear localization signal" evidence="1">
    <location>
        <begin position="184"/>
        <end position="190"/>
    </location>
</feature>
<feature type="short sequence motif" description="Walker A motif" evidence="1">
    <location>
        <begin position="259"/>
        <end position="266"/>
    </location>
</feature>
<feature type="short sequence motif" description="Walker B motif" evidence="1">
    <location>
        <begin position="353"/>
        <end position="358"/>
    </location>
</feature>
<feature type="active site" description="For ATPase activity" evidence="1">
    <location>
        <position position="358"/>
    </location>
</feature>
<feature type="active site" description="For nuclease activity" evidence="1">
    <location>
        <position position="511"/>
    </location>
</feature>
<feature type="active site" description="For nuclease activity" evidence="1">
    <location>
        <position position="583"/>
    </location>
</feature>
<feature type="active site" description="For nuclease activity" evidence="1">
    <location>
        <position position="707"/>
    </location>
</feature>
<keyword id="KW-0238">DNA-binding</keyword>
<keyword id="KW-1048">Host nucleus</keyword>
<keyword id="KW-0378">Hydrolase</keyword>
<keyword id="KW-1185">Reference proteome</keyword>
<keyword id="KW-0231">Viral genome packaging</keyword>
<keyword id="KW-1188">Viral release from host cell</keyword>
<proteinExistence type="inferred from homology"/>
<comment type="function">
    <text evidence="1">Component of the molecular motor that translocates viral genomic DNA in empty capsid during DNA packaging. Forms a tripartite terminase complex together with TRM1 and TRM2 in the host cytoplasm. Once the complex reaches the host nucleus, it interacts with the capsid portal vertex. This portal forms a ring in which genomic DNA is translocated into the capsid. TRM3 carries an RNase H-like nuclease activity that plays an important role for the cleavage of concatemeric viral DNA into unit length genomes.</text>
</comment>
<comment type="subunit">
    <text evidence="1">Interacts with the terminase subunits TRM1 and TRM2. Interacts with portal protein.</text>
</comment>
<comment type="subcellular location">
    <subcellularLocation>
        <location evidence="1">Host nucleus</location>
    </subcellularLocation>
    <text evidence="1">Responsible for the nuclear localization of the two others subunits TRM1 and TRM2.</text>
</comment>
<comment type="similarity">
    <text evidence="1">Belongs to the herpesviridae TRM3 protein family.</text>
</comment>
<organism>
    <name type="scientific">Equine herpesvirus 1 (strain Ab4p)</name>
    <name type="common">EHV-1</name>
    <name type="synonym">Equine abortion virus</name>
    <dbReference type="NCBI Taxonomy" id="31520"/>
    <lineage>
        <taxon>Viruses</taxon>
        <taxon>Duplodnaviria</taxon>
        <taxon>Heunggongvirae</taxon>
        <taxon>Peploviricota</taxon>
        <taxon>Herviviricetes</taxon>
        <taxon>Herpesvirales</taxon>
        <taxon>Orthoherpesviridae</taxon>
        <taxon>Alphaherpesvirinae</taxon>
        <taxon>Varicellovirus</taxon>
        <taxon>Varicellovirus equidalpha1</taxon>
        <taxon>Equid alphaherpesvirus 1</taxon>
    </lineage>
</organism>
<reference key="1">
    <citation type="journal article" date="1992" name="Virology">
        <title>The DNA sequence of equine herpesvirus-1.</title>
        <authorList>
            <person name="Telford E.A.R."/>
            <person name="Watson M.S."/>
            <person name="McBride K."/>
            <person name="Davison A.J."/>
        </authorList>
    </citation>
    <scope>NUCLEOTIDE SEQUENCE [LARGE SCALE GENOMIC DNA]</scope>
</reference>
<evidence type="ECO:0000255" key="1">
    <source>
        <dbReference type="HAMAP-Rule" id="MF_04013"/>
    </source>
</evidence>